<feature type="chain" id="PRO_0000399423" description="Parvalbumin beta 2">
    <location>
        <begin position="1"/>
        <end position="108"/>
    </location>
</feature>
<feature type="domain" description="EF-hand 1" evidence="5">
    <location>
        <begin position="38"/>
        <end position="73"/>
    </location>
</feature>
<feature type="domain" description="EF-hand 2" evidence="5">
    <location>
        <begin position="77"/>
        <end position="108"/>
    </location>
</feature>
<feature type="binding site" evidence="1 5">
    <location>
        <position position="51"/>
    </location>
    <ligand>
        <name>Ca(2+)</name>
        <dbReference type="ChEBI" id="CHEBI:29108"/>
        <label>1</label>
    </ligand>
</feature>
<feature type="binding site" evidence="1 5">
    <location>
        <position position="53"/>
    </location>
    <ligand>
        <name>Ca(2+)</name>
        <dbReference type="ChEBI" id="CHEBI:29108"/>
        <label>1</label>
    </ligand>
</feature>
<feature type="binding site" evidence="1 5">
    <location>
        <position position="55"/>
    </location>
    <ligand>
        <name>Ca(2+)</name>
        <dbReference type="ChEBI" id="CHEBI:29108"/>
        <label>1</label>
    </ligand>
</feature>
<feature type="binding site" evidence="1">
    <location>
        <position position="57"/>
    </location>
    <ligand>
        <name>Ca(2+)</name>
        <dbReference type="ChEBI" id="CHEBI:29108"/>
        <label>1</label>
    </ligand>
</feature>
<feature type="binding site" evidence="1">
    <location>
        <position position="59"/>
    </location>
    <ligand>
        <name>Ca(2+)</name>
        <dbReference type="ChEBI" id="CHEBI:29108"/>
        <label>1</label>
    </ligand>
</feature>
<feature type="binding site" evidence="1 5">
    <location>
        <position position="62"/>
    </location>
    <ligand>
        <name>Ca(2+)</name>
        <dbReference type="ChEBI" id="CHEBI:29108"/>
        <label>1</label>
    </ligand>
</feature>
<feature type="binding site" evidence="1 5">
    <location>
        <position position="90"/>
    </location>
    <ligand>
        <name>Ca(2+)</name>
        <dbReference type="ChEBI" id="CHEBI:29108"/>
        <label>2</label>
    </ligand>
</feature>
<feature type="binding site" evidence="1 5">
    <location>
        <position position="92"/>
    </location>
    <ligand>
        <name>Ca(2+)</name>
        <dbReference type="ChEBI" id="CHEBI:29108"/>
        <label>2</label>
    </ligand>
</feature>
<feature type="binding site" evidence="1 5">
    <location>
        <position position="94"/>
    </location>
    <ligand>
        <name>Ca(2+)</name>
        <dbReference type="ChEBI" id="CHEBI:29108"/>
        <label>2</label>
    </ligand>
</feature>
<feature type="binding site" evidence="1">
    <location>
        <position position="96"/>
    </location>
    <ligand>
        <name>Ca(2+)</name>
        <dbReference type="ChEBI" id="CHEBI:29108"/>
        <label>2</label>
    </ligand>
</feature>
<feature type="binding site" evidence="1 5">
    <location>
        <position position="101"/>
    </location>
    <ligand>
        <name>Ca(2+)</name>
        <dbReference type="ChEBI" id="CHEBI:29108"/>
        <label>2</label>
    </ligand>
</feature>
<feature type="modified residue" description="N-acetylalanine" evidence="6">
    <location>
        <position position="1"/>
    </location>
</feature>
<feature type="unsure residue" description="I or L" evidence="6">
    <location>
        <position position="5"/>
    </location>
</feature>
<feature type="unsure residue" description="L or I" evidence="6">
    <location>
        <position position="6"/>
    </location>
</feature>
<feature type="unsure residue" description="I or L" evidence="6">
    <location>
        <position position="11"/>
    </location>
</feature>
<feature type="unsure residue" description="L or I" evidence="6">
    <location>
        <position position="15"/>
    </location>
</feature>
<feature type="unsure residue" description="K or Q" evidence="6">
    <location>
        <position position="16"/>
    </location>
</feature>
<feature type="unsure residue" description="K or Q" evidence="6">
    <location>
        <position position="27"/>
    </location>
</feature>
<feature type="unsure residue" description="K or Q" evidence="6">
    <location>
        <position position="32"/>
    </location>
</feature>
<feature type="unsure residue" description="L or I" evidence="6">
    <location>
        <position position="35"/>
    </location>
</feature>
<feature type="unsure residue" description="K or Q" evidence="6">
    <location>
        <position position="38"/>
    </location>
</feature>
<feature type="unsure residue" description="I or L" evidence="6">
    <location>
        <position position="43"/>
    </location>
</feature>
<feature type="unsure residue" description="K or Q" evidence="6">
    <location>
        <position position="44"/>
    </location>
</feature>
<feature type="unsure residue" description="K or Q" evidence="6">
    <location>
        <position position="45"/>
    </location>
</feature>
<feature type="unsure residue" description="I or L" evidence="6">
    <location>
        <position position="50"/>
    </location>
</feature>
<feature type="unsure residue" description="Q or K" evidence="6">
    <location>
        <position position="52"/>
    </location>
</feature>
<feature type="unsure residue" description="K or Q" evidence="6">
    <location>
        <position position="54"/>
    </location>
</feature>
<feature type="unsure residue" description="I or L" evidence="6">
    <location>
        <position position="58"/>
    </location>
</feature>
<feature type="unsure residue" description="L or I" evidence="6">
    <location>
        <position position="63"/>
    </location>
</feature>
<feature type="unsure residue" description="K or Q" evidence="6">
    <location>
        <position position="64"/>
    </location>
</feature>
<feature type="unsure residue" description="L or I" evidence="6">
    <location>
        <position position="65"/>
    </location>
</feature>
<feature type="unsure residue" description="L or I" evidence="6">
    <location>
        <position position="67"/>
    </location>
</feature>
<feature type="unsure residue" description="Q or K" evidence="6">
    <location>
        <position position="68"/>
    </location>
</feature>
<feature type="unsure residue" description="L or I" evidence="6">
    <location>
        <position position="77"/>
    </location>
</feature>
<feature type="unsure residue" description="K or Q" evidence="6">
    <location>
        <position position="83"/>
    </location>
</feature>
<feature type="unsure residue" description="L or I" evidence="6">
    <location>
        <position position="86"/>
    </location>
</feature>
<feature type="unsure residue" description="K or Q" evidence="6">
    <location>
        <position position="87"/>
    </location>
</feature>
<feature type="unsure residue" description="I or L" evidence="6">
    <location>
        <position position="97"/>
    </location>
</feature>
<feature type="unsure residue" description="L or I" evidence="6">
    <location>
        <position position="105"/>
    </location>
</feature>
<feature type="unsure residue" description="K or Q" evidence="6">
    <location>
        <position position="107"/>
    </location>
</feature>
<keyword id="KW-0007">Acetylation</keyword>
<keyword id="KW-0020">Allergen</keyword>
<keyword id="KW-0106">Calcium</keyword>
<keyword id="KW-0903">Direct protein sequencing</keyword>
<keyword id="KW-0479">Metal-binding</keyword>
<keyword id="KW-0514">Muscle protein</keyword>
<keyword id="KW-0677">Repeat</keyword>
<comment type="function">
    <text evidence="2 3">In muscle, parvalbumin is thought to be involved in relaxation after contraction. It binds two calcium ions (By similarity).</text>
</comment>
<comment type="mass spectrometry"/>
<comment type="miscellaneous">
    <text evidence="2 6">Is regarded as an important allergen.</text>
</comment>
<comment type="miscellaneous">
    <text evidence="6">On the 2D-gel the determined pI of this protein is: 4.30, its MW is: 11.55 kDa.</text>
</comment>
<comment type="similarity">
    <text evidence="4">Belongs to the parvalbumin family.</text>
</comment>
<dbReference type="SMR" id="P86762"/>
<dbReference type="Allergome" id="7644">
    <property type="allergen name" value="Mer hu 1"/>
</dbReference>
<dbReference type="iPTMnet" id="P86762"/>
<dbReference type="GO" id="GO:0005737">
    <property type="term" value="C:cytoplasm"/>
    <property type="evidence" value="ECO:0007669"/>
    <property type="project" value="TreeGrafter"/>
</dbReference>
<dbReference type="GO" id="GO:0005509">
    <property type="term" value="F:calcium ion binding"/>
    <property type="evidence" value="ECO:0007669"/>
    <property type="project" value="InterPro"/>
</dbReference>
<dbReference type="CDD" id="cd16255">
    <property type="entry name" value="EFh_parvalbumin_beta"/>
    <property type="match status" value="1"/>
</dbReference>
<dbReference type="FunFam" id="1.10.238.10:FF:000060">
    <property type="entry name" value="Parvalbumin, thymic"/>
    <property type="match status" value="1"/>
</dbReference>
<dbReference type="Gene3D" id="1.10.238.10">
    <property type="entry name" value="EF-hand"/>
    <property type="match status" value="1"/>
</dbReference>
<dbReference type="InterPro" id="IPR011992">
    <property type="entry name" value="EF-hand-dom_pair"/>
</dbReference>
<dbReference type="InterPro" id="IPR018247">
    <property type="entry name" value="EF_Hand_1_Ca_BS"/>
</dbReference>
<dbReference type="InterPro" id="IPR002048">
    <property type="entry name" value="EF_hand_dom"/>
</dbReference>
<dbReference type="InterPro" id="IPR008080">
    <property type="entry name" value="Parvalbumin"/>
</dbReference>
<dbReference type="PANTHER" id="PTHR11653:SF12">
    <property type="entry name" value="PARVALBUMIN"/>
    <property type="match status" value="1"/>
</dbReference>
<dbReference type="PANTHER" id="PTHR11653">
    <property type="entry name" value="PARVALBUMIN ALPHA"/>
    <property type="match status" value="1"/>
</dbReference>
<dbReference type="Pfam" id="PF13499">
    <property type="entry name" value="EF-hand_7"/>
    <property type="match status" value="1"/>
</dbReference>
<dbReference type="PRINTS" id="PR01697">
    <property type="entry name" value="PARVALBUMIN"/>
</dbReference>
<dbReference type="SMART" id="SM00054">
    <property type="entry name" value="EFh"/>
    <property type="match status" value="2"/>
</dbReference>
<dbReference type="SUPFAM" id="SSF47473">
    <property type="entry name" value="EF-hand"/>
    <property type="match status" value="1"/>
</dbReference>
<dbReference type="PROSITE" id="PS00018">
    <property type="entry name" value="EF_HAND_1"/>
    <property type="match status" value="2"/>
</dbReference>
<dbReference type="PROSITE" id="PS50222">
    <property type="entry name" value="EF_HAND_2"/>
    <property type="match status" value="2"/>
</dbReference>
<organism>
    <name type="scientific">Merluccius hubbsi</name>
    <name type="common">Argentine hake</name>
    <name type="synonym">Merluccius gayi</name>
    <dbReference type="NCBI Taxonomy" id="89949"/>
    <lineage>
        <taxon>Eukaryota</taxon>
        <taxon>Metazoa</taxon>
        <taxon>Chordata</taxon>
        <taxon>Craniata</taxon>
        <taxon>Vertebrata</taxon>
        <taxon>Euteleostomi</taxon>
        <taxon>Actinopterygii</taxon>
        <taxon>Neopterygii</taxon>
        <taxon>Teleostei</taxon>
        <taxon>Neoteleostei</taxon>
        <taxon>Acanthomorphata</taxon>
        <taxon>Zeiogadaria</taxon>
        <taxon>Gadariae</taxon>
        <taxon>Gadiformes</taxon>
        <taxon>Gadoidei</taxon>
        <taxon>Merlucciidae</taxon>
        <taxon>Merluccius</taxon>
    </lineage>
</organism>
<evidence type="ECO:0000250" key="1">
    <source>
        <dbReference type="UniProtKB" id="P02621"/>
    </source>
</evidence>
<evidence type="ECO:0000250" key="2">
    <source>
        <dbReference type="UniProtKB" id="P02622"/>
    </source>
</evidence>
<evidence type="ECO:0000250" key="3">
    <source>
        <dbReference type="UniProtKB" id="P02624"/>
    </source>
</evidence>
<evidence type="ECO:0000255" key="4"/>
<evidence type="ECO:0000255" key="5">
    <source>
        <dbReference type="PROSITE-ProRule" id="PRU00448"/>
    </source>
</evidence>
<evidence type="ECO:0000269" key="6">
    <source>
    </source>
</evidence>
<evidence type="ECO:0000303" key="7">
    <source>
    </source>
</evidence>
<evidence type="ECO:0000305" key="8"/>
<accession>P86762</accession>
<reference evidence="8" key="1">
    <citation type="journal article" date="2010" name="J. Proteome Res.">
        <title>Extensive de novo sequencing of new parvalbumin isoforms using a novel combination of bottom-up proteomics, accurate molecular mass measurement by FTICR-MS, and selected MS/MS ion monitoring.</title>
        <authorList>
            <person name="Carrera M."/>
            <person name="Canas B."/>
            <person name="Vazquez J."/>
            <person name="Gallardo J.M."/>
        </authorList>
    </citation>
    <scope>PROTEIN SEQUENCE</scope>
    <scope>MASS SPECTROMETRY</scope>
    <scope>ACETYLATION AT ALA-1</scope>
    <source>
        <tissue evidence="6">Muscle</tissue>
    </source>
</reference>
<sequence>AFSGILAEADIAAALKACEAADSFNYKAFFAKVGLSAKSADDIKKAFFVIDQDKSGFIEEDELKLFLQVFSAGARALTDAETKAFLKAGDSDGDGAIGVDEFAVLVKA</sequence>
<name>PRVB2_MERHU</name>
<protein>
    <recommendedName>
        <fullName evidence="7">Parvalbumin beta 2</fullName>
    </recommendedName>
</protein>
<proteinExistence type="evidence at protein level"/>